<reference key="1">
    <citation type="journal article" date="1998" name="Nature">
        <title>Deciphering the biology of Mycobacterium tuberculosis from the complete genome sequence.</title>
        <authorList>
            <person name="Cole S.T."/>
            <person name="Brosch R."/>
            <person name="Parkhill J."/>
            <person name="Garnier T."/>
            <person name="Churcher C.M."/>
            <person name="Harris D.E."/>
            <person name="Gordon S.V."/>
            <person name="Eiglmeier K."/>
            <person name="Gas S."/>
            <person name="Barry C.E. III"/>
            <person name="Tekaia F."/>
            <person name="Badcock K."/>
            <person name="Basham D."/>
            <person name="Brown D."/>
            <person name="Chillingworth T."/>
            <person name="Connor R."/>
            <person name="Davies R.M."/>
            <person name="Devlin K."/>
            <person name="Feltwell T."/>
            <person name="Gentles S."/>
            <person name="Hamlin N."/>
            <person name="Holroyd S."/>
            <person name="Hornsby T."/>
            <person name="Jagels K."/>
            <person name="Krogh A."/>
            <person name="McLean J."/>
            <person name="Moule S."/>
            <person name="Murphy L.D."/>
            <person name="Oliver S."/>
            <person name="Osborne J."/>
            <person name="Quail M.A."/>
            <person name="Rajandream M.A."/>
            <person name="Rogers J."/>
            <person name="Rutter S."/>
            <person name="Seeger K."/>
            <person name="Skelton S."/>
            <person name="Squares S."/>
            <person name="Squares R."/>
            <person name="Sulston J.E."/>
            <person name="Taylor K."/>
            <person name="Whitehead S."/>
            <person name="Barrell B.G."/>
        </authorList>
    </citation>
    <scope>NUCLEOTIDE SEQUENCE [LARGE SCALE GENOMIC DNA]</scope>
    <source>
        <strain>ATCC 25618 / H37Rv</strain>
    </source>
</reference>
<sequence length="448" mass="46475">MAFDAAMSTHEDLLATIRYVRDRTGDPNAWQTGLTPTEVTAVVTSTTRSEQLDAILRKIRQRHSNLYYPAPPDREQGDAARAIADAEAALAHQNSATAQLDLQVVSAILNAHLKTVEGGESLHELQQEIEAAVRIRSDLDTPAGARDFQRFLIGKLKDIREVVATASLDAASKSALMAAWTSLYDASKGDRGDADDRGPASVGSGGAPARGAGQQPELPTRAEPDCLLDSLLLEDPGLLADDLQVPGGTSAAIPSASSTPSLPNLGGATMPGGGATPALVPGVSAPGGLPLSGLLRGVGDEPELTDFDERGQEVRDPADYEHSNEPDERRADDREGADEDAGLGKSESPPQAPTTVTLPNGETVTAASPQLAAAIKAAASGTPIADAFQQQGIAIPLPGTAVANPVDPARISAGDVGVFTATPLPLALAKLFWTARFNTSQPCEGQTF</sequence>
<organism>
    <name type="scientific">Mycobacterium tuberculosis (strain ATCC 25618 / H37Rv)</name>
    <dbReference type="NCBI Taxonomy" id="83332"/>
    <lineage>
        <taxon>Bacteria</taxon>
        <taxon>Bacillati</taxon>
        <taxon>Actinomycetota</taxon>
        <taxon>Actinomycetes</taxon>
        <taxon>Mycobacteriales</taxon>
        <taxon>Mycobacteriaceae</taxon>
        <taxon>Mycobacterium</taxon>
        <taxon>Mycobacterium tuberculosis complex</taxon>
    </lineage>
</organism>
<protein>
    <recommendedName>
        <fullName>Uncharacterized protein Rv0026</fullName>
    </recommendedName>
</protein>
<comment type="similarity">
    <text evidence="2">To M.tuberculosis Rv0025 and Rv0739.</text>
</comment>
<evidence type="ECO:0000256" key="1">
    <source>
        <dbReference type="SAM" id="MobiDB-lite"/>
    </source>
</evidence>
<evidence type="ECO:0000305" key="2"/>
<feature type="chain" id="PRO_0000103643" description="Uncharacterized protein Rv0026">
    <location>
        <begin position="1"/>
        <end position="448"/>
    </location>
</feature>
<feature type="region of interest" description="Disordered" evidence="1">
    <location>
        <begin position="187"/>
        <end position="221"/>
    </location>
</feature>
<feature type="region of interest" description="Disordered" evidence="1">
    <location>
        <begin position="243"/>
        <end position="270"/>
    </location>
</feature>
<feature type="region of interest" description="Disordered" evidence="1">
    <location>
        <begin position="291"/>
        <end position="361"/>
    </location>
</feature>
<feature type="compositionally biased region" description="Basic and acidic residues" evidence="1">
    <location>
        <begin position="187"/>
        <end position="198"/>
    </location>
</feature>
<feature type="compositionally biased region" description="Low complexity" evidence="1">
    <location>
        <begin position="243"/>
        <end position="261"/>
    </location>
</feature>
<feature type="compositionally biased region" description="Basic and acidic residues" evidence="1">
    <location>
        <begin position="307"/>
        <end position="334"/>
    </location>
</feature>
<proteinExistence type="predicted"/>
<dbReference type="EMBL" id="AL123456">
    <property type="protein sequence ID" value="CCP42748.1"/>
    <property type="molecule type" value="Genomic_DNA"/>
</dbReference>
<dbReference type="PIR" id="H70700">
    <property type="entry name" value="H70700"/>
</dbReference>
<dbReference type="RefSeq" id="NP_214540.1">
    <property type="nucleotide sequence ID" value="NC_000962.3"/>
</dbReference>
<dbReference type="RefSeq" id="WP_003901770.1">
    <property type="nucleotide sequence ID" value="NC_000962.3"/>
</dbReference>
<dbReference type="SMR" id="P9WMB1"/>
<dbReference type="STRING" id="83332.Rv0026"/>
<dbReference type="PaxDb" id="83332-Rv0026"/>
<dbReference type="DNASU" id="887057"/>
<dbReference type="GeneID" id="887057"/>
<dbReference type="KEGG" id="mtu:Rv0026"/>
<dbReference type="KEGG" id="mtv:RVBD_0026"/>
<dbReference type="TubercuList" id="Rv0026"/>
<dbReference type="eggNOG" id="ENOG5031IYH">
    <property type="taxonomic scope" value="Bacteria"/>
</dbReference>
<dbReference type="InParanoid" id="P9WMB1"/>
<dbReference type="OrthoDB" id="4761006at2"/>
<dbReference type="Proteomes" id="UP000001584">
    <property type="component" value="Chromosome"/>
</dbReference>
<dbReference type="InterPro" id="IPR019710">
    <property type="entry name" value="DUF4226"/>
</dbReference>
<dbReference type="Pfam" id="PF10774">
    <property type="entry name" value="DUF4226"/>
    <property type="match status" value="1"/>
</dbReference>
<name>Y0026_MYCTU</name>
<accession>P9WMB1</accession>
<accession>L0T438</accession>
<accession>P71596</accession>
<keyword id="KW-1185">Reference proteome</keyword>
<gene>
    <name type="ordered locus">Rv0026</name>
    <name type="ORF">MTCY10H4.26</name>
</gene>